<reference key="1">
    <citation type="submission" date="2005-08" db="EMBL/GenBank/DDBJ databases">
        <authorList>
            <consortium name="NIH - Mammalian Gene Collection (MGC) project"/>
        </authorList>
    </citation>
    <scope>NUCLEOTIDE SEQUENCE [LARGE SCALE MRNA]</scope>
    <source>
        <strain>Hereford</strain>
        <tissue>Uterus</tissue>
    </source>
</reference>
<feature type="chain" id="PRO_0000282866" description="F-box/LRR-repeat protein 21">
    <location>
        <begin position="1"/>
        <end position="434"/>
    </location>
</feature>
<feature type="domain" description="F-box" evidence="2">
    <location>
        <begin position="39"/>
        <end position="85"/>
    </location>
</feature>
<feature type="repeat" description="LRR 1">
    <location>
        <begin position="187"/>
        <end position="213"/>
    </location>
</feature>
<feature type="repeat" description="LRR 2">
    <location>
        <begin position="214"/>
        <end position="239"/>
    </location>
</feature>
<feature type="repeat" description="LRR 3">
    <location>
        <begin position="242"/>
        <end position="265"/>
    </location>
</feature>
<feature type="repeat" description="LRR 4">
    <location>
        <begin position="322"/>
        <end position="347"/>
    </location>
</feature>
<feature type="repeat" description="LRR 5">
    <location>
        <begin position="349"/>
        <end position="374"/>
    </location>
</feature>
<feature type="repeat" description="LRR 6">
    <location>
        <begin position="375"/>
        <end position="400"/>
    </location>
</feature>
<sequence>MKRNRLSFMNKVLQSSPAVKQPKLGCHSSLSQTHMRAALLDWGNLPHHVVLRIFQYLPLIDRARASSVCRRWNEVFHIPDLWRKFEFELNQSAASYFNSTHPDLIQQIIKKHAAHLQYVSFKVDSSTESAEAACGILSQLVNCSIQTLGLISTAKPSFLNMSKSHFVSALTVLFVNSISLSSIKIEDTPVDDPSLSILVANNSGTLRRLKMSSCPHVSSNGILCVADHCQGLRELALNYYMLSDKLLLALSNETHVNLEHLRIDVMSENAGQIEFHSIKRQSWDALIKHSPGVNVVMYFFLYEEEMETFFKEETPVTHLYFGRSVSKEILGRLGLNCPRLTELVVCANGIQVIDTELICIAEHCKNLTALGLSECEVSCSAFIEFVRLCGRKLTHLSIMEEVLIPDDVYSLGEIHTEVSKYLGRIWFPDVMPLW</sequence>
<accession>Q3ZBA7</accession>
<keyword id="KW-0090">Biological rhythms</keyword>
<keyword id="KW-0963">Cytoplasm</keyword>
<keyword id="KW-0433">Leucine-rich repeat</keyword>
<keyword id="KW-0539">Nucleus</keyword>
<keyword id="KW-1185">Reference proteome</keyword>
<keyword id="KW-0677">Repeat</keyword>
<keyword id="KW-0833">Ubl conjugation pathway</keyword>
<organism>
    <name type="scientific">Bos taurus</name>
    <name type="common">Bovine</name>
    <dbReference type="NCBI Taxonomy" id="9913"/>
    <lineage>
        <taxon>Eukaryota</taxon>
        <taxon>Metazoa</taxon>
        <taxon>Chordata</taxon>
        <taxon>Craniata</taxon>
        <taxon>Vertebrata</taxon>
        <taxon>Euteleostomi</taxon>
        <taxon>Mammalia</taxon>
        <taxon>Eutheria</taxon>
        <taxon>Laurasiatheria</taxon>
        <taxon>Artiodactyla</taxon>
        <taxon>Ruminantia</taxon>
        <taxon>Pecora</taxon>
        <taxon>Bovidae</taxon>
        <taxon>Bovinae</taxon>
        <taxon>Bos</taxon>
    </lineage>
</organism>
<protein>
    <recommendedName>
        <fullName>F-box/LRR-repeat protein 21</fullName>
    </recommendedName>
    <alternativeName>
        <fullName>F-box and leucine-rich repeat protein 21</fullName>
    </alternativeName>
</protein>
<dbReference type="EMBL" id="BC103468">
    <property type="protein sequence ID" value="AAI03469.1"/>
    <property type="molecule type" value="mRNA"/>
</dbReference>
<dbReference type="RefSeq" id="NP_001029424.1">
    <property type="nucleotide sequence ID" value="NM_001034252.1"/>
</dbReference>
<dbReference type="SMR" id="Q3ZBA7"/>
<dbReference type="FunCoup" id="Q3ZBA7">
    <property type="interactions" value="194"/>
</dbReference>
<dbReference type="STRING" id="9913.ENSBTAP00000003178"/>
<dbReference type="PaxDb" id="9913-ENSBTAP00000003178"/>
<dbReference type="GeneID" id="505624"/>
<dbReference type="KEGG" id="bta:505624"/>
<dbReference type="CTD" id="213311"/>
<dbReference type="eggNOG" id="KOG1947">
    <property type="taxonomic scope" value="Eukaryota"/>
</dbReference>
<dbReference type="HOGENOM" id="CLU_033637_0_0_1"/>
<dbReference type="InParanoid" id="Q3ZBA7"/>
<dbReference type="OrthoDB" id="9974792at2759"/>
<dbReference type="TreeFam" id="TF352583"/>
<dbReference type="UniPathway" id="UPA00143"/>
<dbReference type="Proteomes" id="UP000009136">
    <property type="component" value="Unplaced"/>
</dbReference>
<dbReference type="GO" id="GO:0005829">
    <property type="term" value="C:cytosol"/>
    <property type="evidence" value="ECO:0000250"/>
    <property type="project" value="UniProtKB"/>
</dbReference>
<dbReference type="GO" id="GO:0005634">
    <property type="term" value="C:nucleus"/>
    <property type="evidence" value="ECO:0000250"/>
    <property type="project" value="UniProtKB"/>
</dbReference>
<dbReference type="GO" id="GO:0019005">
    <property type="term" value="C:SCF ubiquitin ligase complex"/>
    <property type="evidence" value="ECO:0000250"/>
    <property type="project" value="UniProtKB"/>
</dbReference>
<dbReference type="GO" id="GO:0043153">
    <property type="term" value="P:entrainment of circadian clock by photoperiod"/>
    <property type="evidence" value="ECO:0000250"/>
    <property type="project" value="UniProtKB"/>
</dbReference>
<dbReference type="GO" id="GO:0016567">
    <property type="term" value="P:protein ubiquitination"/>
    <property type="evidence" value="ECO:0000250"/>
    <property type="project" value="UniProtKB"/>
</dbReference>
<dbReference type="GO" id="GO:0048511">
    <property type="term" value="P:rhythmic process"/>
    <property type="evidence" value="ECO:0007669"/>
    <property type="project" value="UniProtKB-KW"/>
</dbReference>
<dbReference type="CDD" id="cd22179">
    <property type="entry name" value="F-box_FBXL21"/>
    <property type="match status" value="1"/>
</dbReference>
<dbReference type="CDD" id="cd23956">
    <property type="entry name" value="FBXL21_LRR"/>
    <property type="match status" value="1"/>
</dbReference>
<dbReference type="FunFam" id="1.20.1280.50:FF:000005">
    <property type="entry name" value="F-box/LRR-repeat protein 3 isoform X1"/>
    <property type="match status" value="1"/>
</dbReference>
<dbReference type="FunFam" id="3.80.10.10:FF:000010">
    <property type="entry name" value="F-box/LRR-repeat protein 3 isoform X1"/>
    <property type="match status" value="1"/>
</dbReference>
<dbReference type="Gene3D" id="1.20.1280.50">
    <property type="match status" value="1"/>
</dbReference>
<dbReference type="Gene3D" id="3.80.10.10">
    <property type="entry name" value="Ribonuclease Inhibitor"/>
    <property type="match status" value="1"/>
</dbReference>
<dbReference type="InterPro" id="IPR036047">
    <property type="entry name" value="F-box-like_dom_sf"/>
</dbReference>
<dbReference type="InterPro" id="IPR001810">
    <property type="entry name" value="F-box_dom"/>
</dbReference>
<dbReference type="InterPro" id="IPR006553">
    <property type="entry name" value="Leu-rich_rpt_Cys-con_subtyp"/>
</dbReference>
<dbReference type="InterPro" id="IPR032675">
    <property type="entry name" value="LRR_dom_sf"/>
</dbReference>
<dbReference type="PANTHER" id="PTHR16134">
    <property type="entry name" value="F-BOX/TPR REPEAT PROTEIN POF3"/>
    <property type="match status" value="1"/>
</dbReference>
<dbReference type="PANTHER" id="PTHR16134:SF2">
    <property type="entry name" value="F-BOX_LRR-REPEAT PROTEIN 21-RELATED"/>
    <property type="match status" value="1"/>
</dbReference>
<dbReference type="Pfam" id="PF12937">
    <property type="entry name" value="F-box-like"/>
    <property type="match status" value="1"/>
</dbReference>
<dbReference type="SMART" id="SM00256">
    <property type="entry name" value="FBOX"/>
    <property type="match status" value="1"/>
</dbReference>
<dbReference type="SMART" id="SM00367">
    <property type="entry name" value="LRR_CC"/>
    <property type="match status" value="2"/>
</dbReference>
<dbReference type="SUPFAM" id="SSF81383">
    <property type="entry name" value="F-box domain"/>
    <property type="match status" value="1"/>
</dbReference>
<dbReference type="SUPFAM" id="SSF52047">
    <property type="entry name" value="RNI-like"/>
    <property type="match status" value="1"/>
</dbReference>
<dbReference type="PROSITE" id="PS50181">
    <property type="entry name" value="FBOX"/>
    <property type="match status" value="1"/>
</dbReference>
<evidence type="ECO:0000250" key="1"/>
<evidence type="ECO:0000255" key="2">
    <source>
        <dbReference type="PROSITE-ProRule" id="PRU00080"/>
    </source>
</evidence>
<comment type="function">
    <text evidence="1">Substrate-recognition component of the SCF(FBXL21) E3 ubiquitin ligase complex involved in circadian rhythm function. Plays a key role in the maintenance of both the speed and the robustness of the circadian clock oscillation. The SCF(FBXL21) complex mainly acts in the cytosol and mediates ubiquitination of CRY proteins (CRY1 and CRY2), leading to CRY proteins stabilization. The SCF(FBXL21) complex counteracts the activity of the SCF(FBXL3) complex and protects CRY proteins from degradation. Involved in the hypothalamic suprachiasmatic nucleus (SCN) clock regulating temporal organization of the daily activities (By similarity).</text>
</comment>
<comment type="pathway">
    <text>Protein modification; protein ubiquitination.</text>
</comment>
<comment type="subunit">
    <text evidence="1">Part of the SCF (SKP1-CUL1-F-box) E3 ubiquitin-protein ligase complex SCF(FBXL21) composed of CUL1, SKP1, RBX1 and FBXL21. Interacts with CRY1 and CRY2 (By similarity).</text>
</comment>
<comment type="subcellular location">
    <subcellularLocation>
        <location evidence="1">Cytoplasm</location>
        <location evidence="1">Cytosol</location>
    </subcellularLocation>
    <subcellularLocation>
        <location evidence="1">Nucleus</location>
    </subcellularLocation>
    <text evidence="1">Mainly localizes in the cytosol. Present at low level in the nucleus (By similarity).</text>
</comment>
<proteinExistence type="evidence at transcript level"/>
<name>FXL21_BOVIN</name>
<gene>
    <name type="primary">FBXL21</name>
</gene>